<name>SAR1_ASPFU</name>
<accession>Q4WJS7</accession>
<comment type="function">
    <text evidence="1">Small GTPase component of the coat protein complex II (COPII) which promotes the formation of transport vesicles from the endoplasmic reticulum (ER). The coat has two main functions, the physical deformation of the endoplasmic reticulum membrane into vesicles and the selection of cargo molecules. Sar1 controls the coat assembly in a stepwise manner. Activated Sar1-GTP binds to membranes first and recruits the sec23/24 complex. These sec23/24-sar1 prebudding intermediates are then collected by the Sec13/31 complex as subunits polymerize to form coated transport vesicles. Conversion to sar1-GDP triggers coat release and recycles COPII subunits (By similarity).</text>
</comment>
<comment type="catalytic activity">
    <reaction>
        <text>GTP + H2O = GDP + phosphate + H(+)</text>
        <dbReference type="Rhea" id="RHEA:19669"/>
        <dbReference type="ChEBI" id="CHEBI:15377"/>
        <dbReference type="ChEBI" id="CHEBI:15378"/>
        <dbReference type="ChEBI" id="CHEBI:37565"/>
        <dbReference type="ChEBI" id="CHEBI:43474"/>
        <dbReference type="ChEBI" id="CHEBI:58189"/>
    </reaction>
</comment>
<comment type="subunit">
    <text evidence="1">COPII is composed of at least 5 proteins: the sec23/24 complex, the sec13/31 complex and sar1.</text>
</comment>
<comment type="subcellular location">
    <subcellularLocation>
        <location evidence="1">Cytoplasmic vesicle</location>
        <location evidence="1">COPII-coated vesicle membrane</location>
        <topology evidence="1">Peripheral membrane protein</topology>
        <orientation evidence="1">Cytoplasmic side</orientation>
    </subcellularLocation>
    <subcellularLocation>
        <location evidence="1">Endoplasmic reticulum membrane</location>
        <topology evidence="1">Peripheral membrane protein</topology>
        <orientation evidence="1">Cytoplasmic side</orientation>
    </subcellularLocation>
    <subcellularLocation>
        <location evidence="1">Golgi apparatus membrane</location>
        <topology evidence="1">Peripheral membrane protein</topology>
        <orientation evidence="1">Cytoplasmic side</orientation>
    </subcellularLocation>
</comment>
<comment type="similarity">
    <text evidence="2">Belongs to the small GTPase superfamily. SAR1 family.</text>
</comment>
<protein>
    <recommendedName>
        <fullName>Small COPII coat GTPase sar1</fullName>
        <ecNumber>3.6.5.-</ecNumber>
    </recommendedName>
</protein>
<evidence type="ECO:0000250" key="1"/>
<evidence type="ECO:0000305" key="2"/>
<sequence>MWIINWFYDILASLGLLNKHAKLLFLGLDNAGKTTLLHMLKNDRVATLQPTAHPTSEELAIGNNRFTTFDLGGHQQARRLWKDYFPEVSGIVFLVDAKDHERFPESKAELDALLAMEELAKVPFLILGNKIDHPDAVSEDELRHQLGLYQTTGKGKVPLEGIRPIEVFMCSVVMRQGYGEGIRWLSQYV</sequence>
<dbReference type="EC" id="3.6.5.-"/>
<dbReference type="EMBL" id="AAHF01000007">
    <property type="protein sequence ID" value="EAL88205.1"/>
    <property type="molecule type" value="Genomic_DNA"/>
</dbReference>
<dbReference type="RefSeq" id="XP_750243.1">
    <property type="nucleotide sequence ID" value="XM_745150.1"/>
</dbReference>
<dbReference type="SMR" id="Q4WJS7"/>
<dbReference type="FunCoup" id="Q4WJS7">
    <property type="interactions" value="923"/>
</dbReference>
<dbReference type="STRING" id="330879.Q4WJS7"/>
<dbReference type="EnsemblFungi" id="EAL88205">
    <property type="protein sequence ID" value="EAL88205"/>
    <property type="gene ID" value="AFUA_1G04940"/>
</dbReference>
<dbReference type="GeneID" id="3507426"/>
<dbReference type="KEGG" id="afm:AFUA_1G04940"/>
<dbReference type="VEuPathDB" id="FungiDB:Afu1g04940"/>
<dbReference type="eggNOG" id="KOG0077">
    <property type="taxonomic scope" value="Eukaryota"/>
</dbReference>
<dbReference type="HOGENOM" id="CLU_040729_6_0_1"/>
<dbReference type="InParanoid" id="Q4WJS7"/>
<dbReference type="OMA" id="GLWNKHG"/>
<dbReference type="OrthoDB" id="2011769at2759"/>
<dbReference type="Proteomes" id="UP000002530">
    <property type="component" value="Chromosome 1"/>
</dbReference>
<dbReference type="GO" id="GO:0030127">
    <property type="term" value="C:COPII vesicle coat"/>
    <property type="evidence" value="ECO:0000318"/>
    <property type="project" value="GO_Central"/>
</dbReference>
<dbReference type="GO" id="GO:0070971">
    <property type="term" value="C:endoplasmic reticulum exit site"/>
    <property type="evidence" value="ECO:0000318"/>
    <property type="project" value="GO_Central"/>
</dbReference>
<dbReference type="GO" id="GO:0005789">
    <property type="term" value="C:endoplasmic reticulum membrane"/>
    <property type="evidence" value="ECO:0007669"/>
    <property type="project" value="UniProtKB-SubCell"/>
</dbReference>
<dbReference type="GO" id="GO:0000139">
    <property type="term" value="C:Golgi membrane"/>
    <property type="evidence" value="ECO:0007669"/>
    <property type="project" value="UniProtKB-SubCell"/>
</dbReference>
<dbReference type="GO" id="GO:0044233">
    <property type="term" value="C:mitochondria-associated endoplasmic reticulum membrane contact site"/>
    <property type="evidence" value="ECO:0007669"/>
    <property type="project" value="EnsemblFungi"/>
</dbReference>
<dbReference type="GO" id="GO:0005739">
    <property type="term" value="C:mitochondrion"/>
    <property type="evidence" value="ECO:0007669"/>
    <property type="project" value="GOC"/>
</dbReference>
<dbReference type="GO" id="GO:0005525">
    <property type="term" value="F:GTP binding"/>
    <property type="evidence" value="ECO:0007669"/>
    <property type="project" value="UniProtKB-KW"/>
</dbReference>
<dbReference type="GO" id="GO:0003924">
    <property type="term" value="F:GTPase activity"/>
    <property type="evidence" value="ECO:0000318"/>
    <property type="project" value="GO_Central"/>
</dbReference>
<dbReference type="GO" id="GO:0090158">
    <property type="term" value="P:endoplasmic reticulum membrane organization"/>
    <property type="evidence" value="ECO:0007669"/>
    <property type="project" value="EnsemblFungi"/>
</dbReference>
<dbReference type="GO" id="GO:0006888">
    <property type="term" value="P:endoplasmic reticulum to Golgi vesicle-mediated transport"/>
    <property type="evidence" value="ECO:0000318"/>
    <property type="project" value="GO_Central"/>
</dbReference>
<dbReference type="GO" id="GO:0006886">
    <property type="term" value="P:intracellular protein transport"/>
    <property type="evidence" value="ECO:0007669"/>
    <property type="project" value="InterPro"/>
</dbReference>
<dbReference type="GO" id="GO:0061024">
    <property type="term" value="P:membrane organization"/>
    <property type="evidence" value="ECO:0000318"/>
    <property type="project" value="GO_Central"/>
</dbReference>
<dbReference type="GO" id="GO:0000266">
    <property type="term" value="P:mitochondrial fission"/>
    <property type="evidence" value="ECO:0007669"/>
    <property type="project" value="EnsemblFungi"/>
</dbReference>
<dbReference type="GO" id="GO:0007006">
    <property type="term" value="P:mitochondrial membrane organization"/>
    <property type="evidence" value="ECO:0007669"/>
    <property type="project" value="EnsemblFungi"/>
</dbReference>
<dbReference type="GO" id="GO:0006998">
    <property type="term" value="P:nuclear envelope organization"/>
    <property type="evidence" value="ECO:0007669"/>
    <property type="project" value="EnsemblFungi"/>
</dbReference>
<dbReference type="GO" id="GO:1902953">
    <property type="term" value="P:positive regulation of ER to Golgi vesicle-mediated transport"/>
    <property type="evidence" value="ECO:0007669"/>
    <property type="project" value="EnsemblFungi"/>
</dbReference>
<dbReference type="GO" id="GO:0070863">
    <property type="term" value="P:positive regulation of protein exit from endoplasmic reticulum"/>
    <property type="evidence" value="ECO:0007669"/>
    <property type="project" value="EnsemblFungi"/>
</dbReference>
<dbReference type="GO" id="GO:0003400">
    <property type="term" value="P:regulation of COPII vesicle coating"/>
    <property type="evidence" value="ECO:0000318"/>
    <property type="project" value="GO_Central"/>
</dbReference>
<dbReference type="GO" id="GO:0016050">
    <property type="term" value="P:vesicle organization"/>
    <property type="evidence" value="ECO:0000318"/>
    <property type="project" value="GO_Central"/>
</dbReference>
<dbReference type="CDD" id="cd00879">
    <property type="entry name" value="Sar1"/>
    <property type="match status" value="1"/>
</dbReference>
<dbReference type="FunFam" id="3.40.50.300:FF:000161">
    <property type="entry name" value="Small COPII coat GTPase"/>
    <property type="match status" value="1"/>
</dbReference>
<dbReference type="Gene3D" id="3.40.50.300">
    <property type="entry name" value="P-loop containing nucleotide triphosphate hydrolases"/>
    <property type="match status" value="1"/>
</dbReference>
<dbReference type="InterPro" id="IPR027417">
    <property type="entry name" value="P-loop_NTPase"/>
</dbReference>
<dbReference type="InterPro" id="IPR005225">
    <property type="entry name" value="Small_GTP-bd"/>
</dbReference>
<dbReference type="InterPro" id="IPR006689">
    <property type="entry name" value="Small_GTPase_ARF/SAR"/>
</dbReference>
<dbReference type="InterPro" id="IPR006687">
    <property type="entry name" value="Small_GTPase_SAR1"/>
</dbReference>
<dbReference type="NCBIfam" id="TIGR00231">
    <property type="entry name" value="small_GTP"/>
    <property type="match status" value="1"/>
</dbReference>
<dbReference type="PANTHER" id="PTHR45684">
    <property type="entry name" value="RE74312P"/>
    <property type="match status" value="1"/>
</dbReference>
<dbReference type="Pfam" id="PF00025">
    <property type="entry name" value="Arf"/>
    <property type="match status" value="1"/>
</dbReference>
<dbReference type="PRINTS" id="PR00328">
    <property type="entry name" value="SAR1GTPBP"/>
</dbReference>
<dbReference type="SMART" id="SM00177">
    <property type="entry name" value="ARF"/>
    <property type="match status" value="1"/>
</dbReference>
<dbReference type="SMART" id="SM00178">
    <property type="entry name" value="SAR"/>
    <property type="match status" value="1"/>
</dbReference>
<dbReference type="SUPFAM" id="SSF52540">
    <property type="entry name" value="P-loop containing nucleoside triphosphate hydrolases"/>
    <property type="match status" value="1"/>
</dbReference>
<dbReference type="PROSITE" id="PS51422">
    <property type="entry name" value="SAR1"/>
    <property type="match status" value="1"/>
</dbReference>
<keyword id="KW-0968">Cytoplasmic vesicle</keyword>
<keyword id="KW-0256">Endoplasmic reticulum</keyword>
<keyword id="KW-0931">ER-Golgi transport</keyword>
<keyword id="KW-0333">Golgi apparatus</keyword>
<keyword id="KW-0342">GTP-binding</keyword>
<keyword id="KW-0378">Hydrolase</keyword>
<keyword id="KW-0472">Membrane</keyword>
<keyword id="KW-0547">Nucleotide-binding</keyword>
<keyword id="KW-0653">Protein transport</keyword>
<keyword id="KW-1185">Reference proteome</keyword>
<keyword id="KW-0813">Transport</keyword>
<reference key="1">
    <citation type="journal article" date="2005" name="Nature">
        <title>Genomic sequence of the pathogenic and allergenic filamentous fungus Aspergillus fumigatus.</title>
        <authorList>
            <person name="Nierman W.C."/>
            <person name="Pain A."/>
            <person name="Anderson M.J."/>
            <person name="Wortman J.R."/>
            <person name="Kim H.S."/>
            <person name="Arroyo J."/>
            <person name="Berriman M."/>
            <person name="Abe K."/>
            <person name="Archer D.B."/>
            <person name="Bermejo C."/>
            <person name="Bennett J.W."/>
            <person name="Bowyer P."/>
            <person name="Chen D."/>
            <person name="Collins M."/>
            <person name="Coulsen R."/>
            <person name="Davies R."/>
            <person name="Dyer P.S."/>
            <person name="Farman M.L."/>
            <person name="Fedorova N."/>
            <person name="Fedorova N.D."/>
            <person name="Feldblyum T.V."/>
            <person name="Fischer R."/>
            <person name="Fosker N."/>
            <person name="Fraser A."/>
            <person name="Garcia J.L."/>
            <person name="Garcia M.J."/>
            <person name="Goble A."/>
            <person name="Goldman G.H."/>
            <person name="Gomi K."/>
            <person name="Griffith-Jones S."/>
            <person name="Gwilliam R."/>
            <person name="Haas B.J."/>
            <person name="Haas H."/>
            <person name="Harris D.E."/>
            <person name="Horiuchi H."/>
            <person name="Huang J."/>
            <person name="Humphray S."/>
            <person name="Jimenez J."/>
            <person name="Keller N."/>
            <person name="Khouri H."/>
            <person name="Kitamoto K."/>
            <person name="Kobayashi T."/>
            <person name="Konzack S."/>
            <person name="Kulkarni R."/>
            <person name="Kumagai T."/>
            <person name="Lafton A."/>
            <person name="Latge J.-P."/>
            <person name="Li W."/>
            <person name="Lord A."/>
            <person name="Lu C."/>
            <person name="Majoros W.H."/>
            <person name="May G.S."/>
            <person name="Miller B.L."/>
            <person name="Mohamoud Y."/>
            <person name="Molina M."/>
            <person name="Monod M."/>
            <person name="Mouyna I."/>
            <person name="Mulligan S."/>
            <person name="Murphy L.D."/>
            <person name="O'Neil S."/>
            <person name="Paulsen I."/>
            <person name="Penalva M.A."/>
            <person name="Pertea M."/>
            <person name="Price C."/>
            <person name="Pritchard B.L."/>
            <person name="Quail M.A."/>
            <person name="Rabbinowitsch E."/>
            <person name="Rawlins N."/>
            <person name="Rajandream M.A."/>
            <person name="Reichard U."/>
            <person name="Renauld H."/>
            <person name="Robson G.D."/>
            <person name="Rodriguez de Cordoba S."/>
            <person name="Rodriguez-Pena J.M."/>
            <person name="Ronning C.M."/>
            <person name="Rutter S."/>
            <person name="Salzberg S.L."/>
            <person name="Sanchez M."/>
            <person name="Sanchez-Ferrero J.C."/>
            <person name="Saunders D."/>
            <person name="Seeger K."/>
            <person name="Squares R."/>
            <person name="Squares S."/>
            <person name="Takeuchi M."/>
            <person name="Tekaia F."/>
            <person name="Turner G."/>
            <person name="Vazquez de Aldana C.R."/>
            <person name="Weidman J."/>
            <person name="White O."/>
            <person name="Woodward J.R."/>
            <person name="Yu J.-H."/>
            <person name="Fraser C.M."/>
            <person name="Galagan J.E."/>
            <person name="Asai K."/>
            <person name="Machida M."/>
            <person name="Hall N."/>
            <person name="Barrell B.G."/>
            <person name="Denning D.W."/>
        </authorList>
    </citation>
    <scope>NUCLEOTIDE SEQUENCE [LARGE SCALE GENOMIC DNA]</scope>
    <source>
        <strain>ATCC MYA-4609 / CBS 101355 / FGSC A1100 / Af293</strain>
    </source>
</reference>
<gene>
    <name type="primary">sar1</name>
    <name type="ORF">AFUA_1G04940</name>
</gene>
<proteinExistence type="inferred from homology"/>
<organism>
    <name type="scientific">Aspergillus fumigatus (strain ATCC MYA-4609 / CBS 101355 / FGSC A1100 / Af293)</name>
    <name type="common">Neosartorya fumigata</name>
    <dbReference type="NCBI Taxonomy" id="330879"/>
    <lineage>
        <taxon>Eukaryota</taxon>
        <taxon>Fungi</taxon>
        <taxon>Dikarya</taxon>
        <taxon>Ascomycota</taxon>
        <taxon>Pezizomycotina</taxon>
        <taxon>Eurotiomycetes</taxon>
        <taxon>Eurotiomycetidae</taxon>
        <taxon>Eurotiales</taxon>
        <taxon>Aspergillaceae</taxon>
        <taxon>Aspergillus</taxon>
        <taxon>Aspergillus subgen. Fumigati</taxon>
    </lineage>
</organism>
<feature type="chain" id="PRO_0000295507" description="Small COPII coat GTPase sar1">
    <location>
        <begin position="1"/>
        <end position="189"/>
    </location>
</feature>
<feature type="binding site" evidence="1">
    <location>
        <begin position="27"/>
        <end position="34"/>
    </location>
    <ligand>
        <name>GTP</name>
        <dbReference type="ChEBI" id="CHEBI:37565"/>
    </ligand>
</feature>
<feature type="binding site" evidence="1">
    <location>
        <begin position="70"/>
        <end position="73"/>
    </location>
    <ligand>
        <name>GTP</name>
        <dbReference type="ChEBI" id="CHEBI:37565"/>
    </ligand>
</feature>
<feature type="binding site" evidence="1">
    <location>
        <begin position="129"/>
        <end position="132"/>
    </location>
    <ligand>
        <name>GTP</name>
        <dbReference type="ChEBI" id="CHEBI:37565"/>
    </ligand>
</feature>